<gene>
    <name evidence="1" type="primary">gph</name>
    <name type="ordered locus">PD_1487</name>
</gene>
<comment type="function">
    <text evidence="1">Specifically catalyzes the dephosphorylation of 2-phosphoglycolate. Is involved in the dissimilation of the intracellular 2-phosphoglycolate formed during the DNA repair of 3'-phosphoglycolate ends, a major class of DNA lesions induced by oxidative stress.</text>
</comment>
<comment type="catalytic activity">
    <reaction evidence="1">
        <text>2-phosphoglycolate + H2O = glycolate + phosphate</text>
        <dbReference type="Rhea" id="RHEA:14369"/>
        <dbReference type="ChEBI" id="CHEBI:15377"/>
        <dbReference type="ChEBI" id="CHEBI:29805"/>
        <dbReference type="ChEBI" id="CHEBI:43474"/>
        <dbReference type="ChEBI" id="CHEBI:58033"/>
        <dbReference type="EC" id="3.1.3.18"/>
    </reaction>
</comment>
<comment type="cofactor">
    <cofactor evidence="1">
        <name>Mg(2+)</name>
        <dbReference type="ChEBI" id="CHEBI:18420"/>
    </cofactor>
</comment>
<comment type="pathway">
    <text evidence="1">Organic acid metabolism; glycolate biosynthesis; glycolate from 2-phosphoglycolate: step 1/1.</text>
</comment>
<comment type="similarity">
    <text evidence="1">Belongs to the HAD-like hydrolase superfamily. CbbY/CbbZ/Gph/YieH family.</text>
</comment>
<proteinExistence type="inferred from homology"/>
<name>GPH_XYLFT</name>
<feature type="chain" id="PRO_0000108049" description="Phosphoglycolate phosphatase">
    <location>
        <begin position="1"/>
        <end position="229"/>
    </location>
</feature>
<feature type="active site" description="Nucleophile" evidence="1">
    <location>
        <position position="18"/>
    </location>
</feature>
<feature type="binding site" evidence="1">
    <location>
        <position position="18"/>
    </location>
    <ligand>
        <name>Mg(2+)</name>
        <dbReference type="ChEBI" id="CHEBI:18420"/>
    </ligand>
</feature>
<feature type="binding site" evidence="1">
    <location>
        <position position="20"/>
    </location>
    <ligand>
        <name>Mg(2+)</name>
        <dbReference type="ChEBI" id="CHEBI:18420"/>
    </ligand>
</feature>
<feature type="binding site" evidence="1">
    <location>
        <position position="176"/>
    </location>
    <ligand>
        <name>Mg(2+)</name>
        <dbReference type="ChEBI" id="CHEBI:18420"/>
    </ligand>
</feature>
<accession>Q87BG6</accession>
<keyword id="KW-0119">Carbohydrate metabolism</keyword>
<keyword id="KW-0378">Hydrolase</keyword>
<keyword id="KW-0460">Magnesium</keyword>
<keyword id="KW-0479">Metal-binding</keyword>
<keyword id="KW-1185">Reference proteome</keyword>
<reference key="1">
    <citation type="journal article" date="2003" name="J. Bacteriol.">
        <title>Comparative analyses of the complete genome sequences of Pierce's disease and citrus variegated chlorosis strains of Xylella fastidiosa.</title>
        <authorList>
            <person name="Van Sluys M.A."/>
            <person name="de Oliveira M.C."/>
            <person name="Monteiro-Vitorello C.B."/>
            <person name="Miyaki C.Y."/>
            <person name="Furlan L.R."/>
            <person name="Camargo L.E.A."/>
            <person name="da Silva A.C.R."/>
            <person name="Moon D.H."/>
            <person name="Takita M.A."/>
            <person name="Lemos E.G.M."/>
            <person name="Machado M.A."/>
            <person name="Ferro M.I.T."/>
            <person name="da Silva F.R."/>
            <person name="Goldman M.H.S."/>
            <person name="Goldman G.H."/>
            <person name="Lemos M.V.F."/>
            <person name="El-Dorry H."/>
            <person name="Tsai S.M."/>
            <person name="Carrer H."/>
            <person name="Carraro D.M."/>
            <person name="de Oliveira R.C."/>
            <person name="Nunes L.R."/>
            <person name="Siqueira W.J."/>
            <person name="Coutinho L.L."/>
            <person name="Kimura E.T."/>
            <person name="Ferro E.S."/>
            <person name="Harakava R."/>
            <person name="Kuramae E.E."/>
            <person name="Marino C.L."/>
            <person name="Giglioti E."/>
            <person name="Abreu I.L."/>
            <person name="Alves L.M.C."/>
            <person name="do Amaral A.M."/>
            <person name="Baia G.S."/>
            <person name="Blanco S.R."/>
            <person name="Brito M.S."/>
            <person name="Cannavan F.S."/>
            <person name="Celestino A.V."/>
            <person name="da Cunha A.F."/>
            <person name="Fenille R.C."/>
            <person name="Ferro J.A."/>
            <person name="Formighieri E.F."/>
            <person name="Kishi L.T."/>
            <person name="Leoni S.G."/>
            <person name="Oliveira A.R."/>
            <person name="Rosa V.E. Jr."/>
            <person name="Sassaki F.T."/>
            <person name="Sena J.A.D."/>
            <person name="de Souza A.A."/>
            <person name="Truffi D."/>
            <person name="Tsukumo F."/>
            <person name="Yanai G.M."/>
            <person name="Zaros L.G."/>
            <person name="Civerolo E.L."/>
            <person name="Simpson A.J.G."/>
            <person name="Almeida N.F. Jr."/>
            <person name="Setubal J.C."/>
            <person name="Kitajima J.P."/>
        </authorList>
    </citation>
    <scope>NUCLEOTIDE SEQUENCE [LARGE SCALE GENOMIC DNA]</scope>
    <source>
        <strain>Temecula1 / ATCC 700964</strain>
    </source>
</reference>
<sequence>MPLNEVSGNAFPRTVLFDLDGTLLDSAPDMLATANAMLAARGRAPITLMQLRPVISRGTFRIIAVAFPELDAAAIQGLIPEFLQRYEALIGSVSKPFDGVEMMLHALECAGTVWGIVTNKPEFLARLILPLLGWTSRCAVLIGGDTLAERKPHPLPLLTAAERIGVMPTDCVYVGDDVRDIQAARAAGMPSMVALWGYRSHEDNPMTWQADTLVEQPHLLSRPDVWPST</sequence>
<organism>
    <name type="scientific">Xylella fastidiosa (strain Temecula1 / ATCC 700964)</name>
    <dbReference type="NCBI Taxonomy" id="183190"/>
    <lineage>
        <taxon>Bacteria</taxon>
        <taxon>Pseudomonadati</taxon>
        <taxon>Pseudomonadota</taxon>
        <taxon>Gammaproteobacteria</taxon>
        <taxon>Lysobacterales</taxon>
        <taxon>Lysobacteraceae</taxon>
        <taxon>Xylella</taxon>
    </lineage>
</organism>
<evidence type="ECO:0000255" key="1">
    <source>
        <dbReference type="HAMAP-Rule" id="MF_00495"/>
    </source>
</evidence>
<protein>
    <recommendedName>
        <fullName evidence="1">Phosphoglycolate phosphatase</fullName>
        <shortName evidence="1">PGP</shortName>
        <shortName evidence="1">PGPase</shortName>
        <ecNumber evidence="1">3.1.3.18</ecNumber>
    </recommendedName>
</protein>
<dbReference type="EC" id="3.1.3.18" evidence="1"/>
<dbReference type="EMBL" id="AE009442">
    <property type="protein sequence ID" value="AAO29331.1"/>
    <property type="molecule type" value="Genomic_DNA"/>
</dbReference>
<dbReference type="RefSeq" id="WP_004088499.1">
    <property type="nucleotide sequence ID" value="NC_004556.1"/>
</dbReference>
<dbReference type="SMR" id="Q87BG6"/>
<dbReference type="KEGG" id="xft:PD_1487"/>
<dbReference type="HOGENOM" id="CLU_045011_19_1_6"/>
<dbReference type="UniPathway" id="UPA00865">
    <property type="reaction ID" value="UER00834"/>
</dbReference>
<dbReference type="Proteomes" id="UP000002516">
    <property type="component" value="Chromosome"/>
</dbReference>
<dbReference type="GO" id="GO:0005829">
    <property type="term" value="C:cytosol"/>
    <property type="evidence" value="ECO:0007669"/>
    <property type="project" value="TreeGrafter"/>
</dbReference>
<dbReference type="GO" id="GO:0046872">
    <property type="term" value="F:metal ion binding"/>
    <property type="evidence" value="ECO:0007669"/>
    <property type="project" value="UniProtKB-KW"/>
</dbReference>
<dbReference type="GO" id="GO:0008967">
    <property type="term" value="F:phosphoglycolate phosphatase activity"/>
    <property type="evidence" value="ECO:0007669"/>
    <property type="project" value="UniProtKB-UniRule"/>
</dbReference>
<dbReference type="GO" id="GO:0005975">
    <property type="term" value="P:carbohydrate metabolic process"/>
    <property type="evidence" value="ECO:0007669"/>
    <property type="project" value="InterPro"/>
</dbReference>
<dbReference type="GO" id="GO:0006281">
    <property type="term" value="P:DNA repair"/>
    <property type="evidence" value="ECO:0007669"/>
    <property type="project" value="TreeGrafter"/>
</dbReference>
<dbReference type="GO" id="GO:0046295">
    <property type="term" value="P:glycolate biosynthetic process"/>
    <property type="evidence" value="ECO:0007669"/>
    <property type="project" value="UniProtKB-UniRule"/>
</dbReference>
<dbReference type="FunFam" id="3.40.50.1000:FF:000022">
    <property type="entry name" value="Phosphoglycolate phosphatase"/>
    <property type="match status" value="1"/>
</dbReference>
<dbReference type="Gene3D" id="3.40.50.1000">
    <property type="entry name" value="HAD superfamily/HAD-like"/>
    <property type="match status" value="1"/>
</dbReference>
<dbReference type="Gene3D" id="1.10.150.240">
    <property type="entry name" value="Putative phosphatase, domain 2"/>
    <property type="match status" value="1"/>
</dbReference>
<dbReference type="HAMAP" id="MF_00495">
    <property type="entry name" value="GPH_hydrolase_bact"/>
    <property type="match status" value="1"/>
</dbReference>
<dbReference type="InterPro" id="IPR050155">
    <property type="entry name" value="HAD-like_hydrolase_sf"/>
</dbReference>
<dbReference type="InterPro" id="IPR036412">
    <property type="entry name" value="HAD-like_sf"/>
</dbReference>
<dbReference type="InterPro" id="IPR006439">
    <property type="entry name" value="HAD-SF_hydro_IA"/>
</dbReference>
<dbReference type="InterPro" id="IPR041492">
    <property type="entry name" value="HAD_2"/>
</dbReference>
<dbReference type="InterPro" id="IPR023214">
    <property type="entry name" value="HAD_sf"/>
</dbReference>
<dbReference type="InterPro" id="IPR023198">
    <property type="entry name" value="PGP-like_dom2"/>
</dbReference>
<dbReference type="InterPro" id="IPR037512">
    <property type="entry name" value="PGPase_prok"/>
</dbReference>
<dbReference type="NCBIfam" id="TIGR01549">
    <property type="entry name" value="HAD-SF-IA-v1"/>
    <property type="match status" value="1"/>
</dbReference>
<dbReference type="NCBIfam" id="TIGR01509">
    <property type="entry name" value="HAD-SF-IA-v3"/>
    <property type="match status" value="1"/>
</dbReference>
<dbReference type="NCBIfam" id="TIGR01449">
    <property type="entry name" value="PGP_bact"/>
    <property type="match status" value="1"/>
</dbReference>
<dbReference type="NCBIfam" id="NF009700">
    <property type="entry name" value="PRK13226.1"/>
    <property type="match status" value="1"/>
</dbReference>
<dbReference type="PANTHER" id="PTHR43434">
    <property type="entry name" value="PHOSPHOGLYCOLATE PHOSPHATASE"/>
    <property type="match status" value="1"/>
</dbReference>
<dbReference type="PANTHER" id="PTHR43434:SF23">
    <property type="entry name" value="PHOSPHOGLYCOLATE PHOSPHATASE"/>
    <property type="match status" value="1"/>
</dbReference>
<dbReference type="Pfam" id="PF13419">
    <property type="entry name" value="HAD_2"/>
    <property type="match status" value="1"/>
</dbReference>
<dbReference type="PRINTS" id="PR00413">
    <property type="entry name" value="HADHALOGNASE"/>
</dbReference>
<dbReference type="SFLD" id="SFLDG01129">
    <property type="entry name" value="C1.5:_HAD__Beta-PGM__Phosphata"/>
    <property type="match status" value="1"/>
</dbReference>
<dbReference type="SFLD" id="SFLDS00003">
    <property type="entry name" value="Haloacid_Dehalogenase"/>
    <property type="match status" value="1"/>
</dbReference>
<dbReference type="SUPFAM" id="SSF56784">
    <property type="entry name" value="HAD-like"/>
    <property type="match status" value="1"/>
</dbReference>